<evidence type="ECO:0000305" key="1"/>
<feature type="chain" id="PRO_0000217311" description="Putative uncharacterized protein ycf15">
    <location>
        <begin position="1"/>
        <end position="80"/>
    </location>
</feature>
<geneLocation type="chloroplast"/>
<sequence length="80" mass="9408">METPVSSLFWTLAPRNNMLLLKDGRIEILDQNTMYGWYELPKQEFLNSVRTIQIFTTKKYCIPFRIGPERRRKAGMPTGV</sequence>
<proteinExistence type="uncertain"/>
<comment type="subcellular location">
    <subcellularLocation>
        <location>Plastid</location>
        <location>Chloroplast</location>
    </subcellularLocation>
</comment>
<comment type="similarity">
    <text evidence="1">Belongs to the ycf15 family.</text>
</comment>
<comment type="caution">
    <text evidence="1">Could be the product of a pseudogene.</text>
</comment>
<dbReference type="EMBL" id="X64616">
    <property type="protein sequence ID" value="CAA45899.2"/>
    <property type="molecule type" value="Genomic_DNA"/>
</dbReference>
<dbReference type="PIR" id="S19984">
    <property type="entry name" value="S19984"/>
</dbReference>
<dbReference type="GO" id="GO:0009507">
    <property type="term" value="C:chloroplast"/>
    <property type="evidence" value="ECO:0007669"/>
    <property type="project" value="UniProtKB-SubCell"/>
</dbReference>
<dbReference type="InterPro" id="IPR019645">
    <property type="entry name" value="Uncharacterised_Ycf15"/>
</dbReference>
<dbReference type="Pfam" id="PF10705">
    <property type="entry name" value="Ycf15"/>
    <property type="match status" value="1"/>
</dbReference>
<organism>
    <name type="scientific">Oenothera picensis</name>
    <name type="common">Evening primrose</name>
    <dbReference type="NCBI Taxonomy" id="3946"/>
    <lineage>
        <taxon>Eukaryota</taxon>
        <taxon>Viridiplantae</taxon>
        <taxon>Streptophyta</taxon>
        <taxon>Embryophyta</taxon>
        <taxon>Tracheophyta</taxon>
        <taxon>Spermatophyta</taxon>
        <taxon>Magnoliopsida</taxon>
        <taxon>eudicotyledons</taxon>
        <taxon>Gunneridae</taxon>
        <taxon>Pentapetalae</taxon>
        <taxon>rosids</taxon>
        <taxon>malvids</taxon>
        <taxon>Myrtales</taxon>
        <taxon>Onagraceae</taxon>
        <taxon>Onagroideae</taxon>
        <taxon>Onagreae</taxon>
        <taxon>Oenothera</taxon>
    </lineage>
</organism>
<name>YCF15_OENPI</name>
<accession>P68941</accession>
<accession>P31566</accession>
<reference key="1">
    <citation type="journal article" date="1993" name="Curr. Genet.">
        <title>In-frame length mutations associated with short tandem repeats are located in unassigned open reading frames of Oenothera chloroplast DNA.</title>
        <authorList>
            <person name="Nimzyk R."/>
            <person name="Schoendorf T."/>
            <person name="Hachtel W."/>
        </authorList>
    </citation>
    <scope>NUCLEOTIDE SEQUENCE [GENOMIC DNA]</scope>
</reference>
<protein>
    <recommendedName>
        <fullName>Putative uncharacterized protein ycf15</fullName>
    </recommendedName>
    <alternativeName>
        <fullName>ORF 80</fullName>
    </alternativeName>
</protein>
<gene>
    <name type="primary">ycf15</name>
</gene>
<keyword id="KW-0150">Chloroplast</keyword>
<keyword id="KW-0934">Plastid</keyword>